<dbReference type="EMBL" id="AL513382">
    <property type="protein sequence ID" value="CAD05283.1"/>
    <property type="molecule type" value="Genomic_DNA"/>
</dbReference>
<dbReference type="EMBL" id="AE014613">
    <property type="protein sequence ID" value="AAO69675.1"/>
    <property type="molecule type" value="Genomic_DNA"/>
</dbReference>
<dbReference type="RefSeq" id="NP_455371.1">
    <property type="nucleotide sequence ID" value="NC_003198.1"/>
</dbReference>
<dbReference type="RefSeq" id="WP_000533542.1">
    <property type="nucleotide sequence ID" value="NZ_WSUR01000019.1"/>
</dbReference>
<dbReference type="SMR" id="P67711"/>
<dbReference type="STRING" id="220341.gene:17584873"/>
<dbReference type="KEGG" id="stt:t2052"/>
<dbReference type="KEGG" id="sty:STY0876"/>
<dbReference type="PATRIC" id="fig|220341.7.peg.884"/>
<dbReference type="eggNOG" id="COG1321">
    <property type="taxonomic scope" value="Bacteria"/>
</dbReference>
<dbReference type="HOGENOM" id="CLU_069532_2_0_6"/>
<dbReference type="OMA" id="SWDAIDR"/>
<dbReference type="OrthoDB" id="9791355at2"/>
<dbReference type="Proteomes" id="UP000000541">
    <property type="component" value="Chromosome"/>
</dbReference>
<dbReference type="Proteomes" id="UP000002670">
    <property type="component" value="Chromosome"/>
</dbReference>
<dbReference type="GO" id="GO:0005737">
    <property type="term" value="C:cytoplasm"/>
    <property type="evidence" value="ECO:0007669"/>
    <property type="project" value="UniProtKB-SubCell"/>
</dbReference>
<dbReference type="GO" id="GO:0003677">
    <property type="term" value="F:DNA binding"/>
    <property type="evidence" value="ECO:0007669"/>
    <property type="project" value="UniProtKB-KW"/>
</dbReference>
<dbReference type="GO" id="GO:0003700">
    <property type="term" value="F:DNA-binding transcription factor activity"/>
    <property type="evidence" value="ECO:0007669"/>
    <property type="project" value="InterPro"/>
</dbReference>
<dbReference type="GO" id="GO:0046983">
    <property type="term" value="F:protein dimerization activity"/>
    <property type="evidence" value="ECO:0007669"/>
    <property type="project" value="InterPro"/>
</dbReference>
<dbReference type="GO" id="GO:0046914">
    <property type="term" value="F:transition metal ion binding"/>
    <property type="evidence" value="ECO:0007669"/>
    <property type="project" value="InterPro"/>
</dbReference>
<dbReference type="FunFam" id="1.10.10.10:FF:000108">
    <property type="entry name" value="Mn-dependent transcriptional regulator MntR"/>
    <property type="match status" value="1"/>
</dbReference>
<dbReference type="FunFam" id="1.10.60.10:FF:000002">
    <property type="entry name" value="Mn-dependent transcriptional regulator MntR"/>
    <property type="match status" value="1"/>
</dbReference>
<dbReference type="Gene3D" id="1.10.60.10">
    <property type="entry name" value="Iron dependent repressor, metal binding and dimerisation domain"/>
    <property type="match status" value="1"/>
</dbReference>
<dbReference type="Gene3D" id="1.10.10.10">
    <property type="entry name" value="Winged helix-like DNA-binding domain superfamily/Winged helix DNA-binding domain"/>
    <property type="match status" value="1"/>
</dbReference>
<dbReference type="InterPro" id="IPR050536">
    <property type="entry name" value="DtxR_MntR_Metal-Reg"/>
</dbReference>
<dbReference type="InterPro" id="IPR001367">
    <property type="entry name" value="Fe_dep_repressor"/>
</dbReference>
<dbReference type="InterPro" id="IPR036421">
    <property type="entry name" value="Fe_dep_repressor_sf"/>
</dbReference>
<dbReference type="InterPro" id="IPR022687">
    <property type="entry name" value="HTH_DTXR"/>
</dbReference>
<dbReference type="InterPro" id="IPR022689">
    <property type="entry name" value="Iron_dep_repressor"/>
</dbReference>
<dbReference type="InterPro" id="IPR036388">
    <property type="entry name" value="WH-like_DNA-bd_sf"/>
</dbReference>
<dbReference type="InterPro" id="IPR036390">
    <property type="entry name" value="WH_DNA-bd_sf"/>
</dbReference>
<dbReference type="NCBIfam" id="NF008273">
    <property type="entry name" value="PRK11050.1"/>
    <property type="match status" value="1"/>
</dbReference>
<dbReference type="PANTHER" id="PTHR33238">
    <property type="entry name" value="IRON (METAL) DEPENDENT REPRESSOR, DTXR FAMILY"/>
    <property type="match status" value="1"/>
</dbReference>
<dbReference type="PANTHER" id="PTHR33238:SF11">
    <property type="entry name" value="TRANSCRIPTIONAL REGULATOR MNTR"/>
    <property type="match status" value="1"/>
</dbReference>
<dbReference type="Pfam" id="PF02742">
    <property type="entry name" value="Fe_dep_repr_C"/>
    <property type="match status" value="1"/>
</dbReference>
<dbReference type="Pfam" id="PF01325">
    <property type="entry name" value="Fe_dep_repress"/>
    <property type="match status" value="1"/>
</dbReference>
<dbReference type="SMART" id="SM00529">
    <property type="entry name" value="HTH_DTXR"/>
    <property type="match status" value="1"/>
</dbReference>
<dbReference type="SUPFAM" id="SSF47979">
    <property type="entry name" value="Iron-dependent repressor protein, dimerization domain"/>
    <property type="match status" value="1"/>
</dbReference>
<dbReference type="SUPFAM" id="SSF46785">
    <property type="entry name" value="Winged helix' DNA-binding domain"/>
    <property type="match status" value="1"/>
</dbReference>
<dbReference type="PROSITE" id="PS50944">
    <property type="entry name" value="HTH_DTXR"/>
    <property type="match status" value="1"/>
</dbReference>
<reference key="1">
    <citation type="journal article" date="2001" name="Nature">
        <title>Complete genome sequence of a multiple drug resistant Salmonella enterica serovar Typhi CT18.</title>
        <authorList>
            <person name="Parkhill J."/>
            <person name="Dougan G."/>
            <person name="James K.D."/>
            <person name="Thomson N.R."/>
            <person name="Pickard D."/>
            <person name="Wain J."/>
            <person name="Churcher C.M."/>
            <person name="Mungall K.L."/>
            <person name="Bentley S.D."/>
            <person name="Holden M.T.G."/>
            <person name="Sebaihia M."/>
            <person name="Baker S."/>
            <person name="Basham D."/>
            <person name="Brooks K."/>
            <person name="Chillingworth T."/>
            <person name="Connerton P."/>
            <person name="Cronin A."/>
            <person name="Davis P."/>
            <person name="Davies R.M."/>
            <person name="Dowd L."/>
            <person name="White N."/>
            <person name="Farrar J."/>
            <person name="Feltwell T."/>
            <person name="Hamlin N."/>
            <person name="Haque A."/>
            <person name="Hien T.T."/>
            <person name="Holroyd S."/>
            <person name="Jagels K."/>
            <person name="Krogh A."/>
            <person name="Larsen T.S."/>
            <person name="Leather S."/>
            <person name="Moule S."/>
            <person name="O'Gaora P."/>
            <person name="Parry C."/>
            <person name="Quail M.A."/>
            <person name="Rutherford K.M."/>
            <person name="Simmonds M."/>
            <person name="Skelton J."/>
            <person name="Stevens K."/>
            <person name="Whitehead S."/>
            <person name="Barrell B.G."/>
        </authorList>
    </citation>
    <scope>NUCLEOTIDE SEQUENCE [LARGE SCALE GENOMIC DNA]</scope>
    <source>
        <strain>CT18</strain>
    </source>
</reference>
<reference key="2">
    <citation type="journal article" date="2003" name="J. Bacteriol.">
        <title>Comparative genomics of Salmonella enterica serovar Typhi strains Ty2 and CT18.</title>
        <authorList>
            <person name="Deng W."/>
            <person name="Liou S.-R."/>
            <person name="Plunkett G. III"/>
            <person name="Mayhew G.F."/>
            <person name="Rose D.J."/>
            <person name="Burland V."/>
            <person name="Kodoyianni V."/>
            <person name="Schwartz D.C."/>
            <person name="Blattner F.R."/>
        </authorList>
    </citation>
    <scope>NUCLEOTIDE SEQUENCE [LARGE SCALE GENOMIC DNA]</scope>
    <source>
        <strain>ATCC 700931 / Ty2</strain>
    </source>
</reference>
<proteinExistence type="inferred from homology"/>
<keyword id="KW-0010">Activator</keyword>
<keyword id="KW-0963">Cytoplasm</keyword>
<keyword id="KW-0238">DNA-binding</keyword>
<keyword id="KW-0464">Manganese</keyword>
<keyword id="KW-0678">Repressor</keyword>
<keyword id="KW-0804">Transcription</keyword>
<keyword id="KW-0805">Transcription regulation</keyword>
<protein>
    <recommendedName>
        <fullName>Transcriptional regulator MntR</fullName>
    </recommendedName>
    <alternativeName>
        <fullName>Manganese transport regulator</fullName>
    </alternativeName>
</protein>
<accession>P67711</accession>
<accession>Q8XH22</accession>
<comment type="function">
    <text evidence="1">In the presence of manganese, represses expression of mntH and mntS. Up-regulates expression of mntP (By similarity).</text>
</comment>
<comment type="subunit">
    <text evidence="1">Homodimer.</text>
</comment>
<comment type="subcellular location">
    <subcellularLocation>
        <location evidence="1">Cytoplasm</location>
    </subcellularLocation>
</comment>
<comment type="domain">
    <text evidence="1">It contains an N-terminal DNA-binding domain and a metal-binding domain.</text>
</comment>
<comment type="similarity">
    <text evidence="3">Belongs to the DtxR/MntR family.</text>
</comment>
<feature type="chain" id="PRO_0000201114" description="Transcriptional regulator MntR">
    <location>
        <begin position="1"/>
        <end position="157"/>
    </location>
</feature>
<feature type="domain" description="HTH dtxR-type" evidence="2">
    <location>
        <begin position="34"/>
        <end position="95"/>
    </location>
</feature>
<gene>
    <name type="primary">mntR</name>
    <name type="ordered locus">STY0876</name>
    <name type="ordered locus">t2052</name>
</gene>
<organism>
    <name type="scientific">Salmonella typhi</name>
    <dbReference type="NCBI Taxonomy" id="90370"/>
    <lineage>
        <taxon>Bacteria</taxon>
        <taxon>Pseudomonadati</taxon>
        <taxon>Pseudomonadota</taxon>
        <taxon>Gammaproteobacteria</taxon>
        <taxon>Enterobacterales</taxon>
        <taxon>Enterobacteriaceae</taxon>
        <taxon>Salmonella</taxon>
    </lineage>
</organism>
<evidence type="ECO:0000250" key="1"/>
<evidence type="ECO:0000255" key="2">
    <source>
        <dbReference type="PROSITE-ProRule" id="PRU00296"/>
    </source>
</evidence>
<evidence type="ECO:0000305" key="3"/>
<sequence length="157" mass="17727">MGRRAGTPTTKKVTQLVNVEEHVEGFRQVREAHRRELIDDYVELISDLIIEVGEARQVDMAARLGVSQPTVAKMLKRLASLGFIQMIPWRGVFLTPEGEKLAQESRERHQIVENFLLVLGVSPEIARRDAEGMEHHVSQETLDAFLAFTQQHGTSAE</sequence>
<name>MNTR_SALTI</name>